<keyword id="KW-0131">Cell cycle</keyword>
<keyword id="KW-0132">Cell division</keyword>
<keyword id="KW-0133">Cell shape</keyword>
<keyword id="KW-0175">Coiled coil</keyword>
<keyword id="KW-0963">Cytoplasm</keyword>
<proteinExistence type="inferred from homology"/>
<accession>B7HL74</accession>
<gene>
    <name evidence="1" type="primary">gpsB</name>
    <name type="ordered locus">BCAH187_A1727</name>
</gene>
<dbReference type="EMBL" id="CP001177">
    <property type="protein sequence ID" value="ACJ82511.1"/>
    <property type="molecule type" value="Genomic_DNA"/>
</dbReference>
<dbReference type="SMR" id="B7HL74"/>
<dbReference type="KEGG" id="bcr:BCAH187_A1727"/>
<dbReference type="HOGENOM" id="CLU_140309_1_0_9"/>
<dbReference type="Proteomes" id="UP000002214">
    <property type="component" value="Chromosome"/>
</dbReference>
<dbReference type="GO" id="GO:0005737">
    <property type="term" value="C:cytoplasm"/>
    <property type="evidence" value="ECO:0007669"/>
    <property type="project" value="UniProtKB-SubCell"/>
</dbReference>
<dbReference type="GO" id="GO:0051301">
    <property type="term" value="P:cell division"/>
    <property type="evidence" value="ECO:0007669"/>
    <property type="project" value="UniProtKB-UniRule"/>
</dbReference>
<dbReference type="GO" id="GO:0008360">
    <property type="term" value="P:regulation of cell shape"/>
    <property type="evidence" value="ECO:0007669"/>
    <property type="project" value="UniProtKB-UniRule"/>
</dbReference>
<dbReference type="Gene3D" id="6.10.250.660">
    <property type="match status" value="1"/>
</dbReference>
<dbReference type="HAMAP" id="MF_02011">
    <property type="entry name" value="GpsB"/>
    <property type="match status" value="1"/>
</dbReference>
<dbReference type="InterPro" id="IPR011229">
    <property type="entry name" value="Cell_cycle_GpsB"/>
</dbReference>
<dbReference type="InterPro" id="IPR019933">
    <property type="entry name" value="DivIVA_domain"/>
</dbReference>
<dbReference type="InterPro" id="IPR007793">
    <property type="entry name" value="DivIVA_fam"/>
</dbReference>
<dbReference type="NCBIfam" id="TIGR03544">
    <property type="entry name" value="DivI1A_domain"/>
    <property type="match status" value="1"/>
</dbReference>
<dbReference type="NCBIfam" id="NF010725">
    <property type="entry name" value="PRK14127.1"/>
    <property type="match status" value="1"/>
</dbReference>
<dbReference type="PANTHER" id="PTHR35794:SF1">
    <property type="entry name" value="CELL CYCLE PROTEIN GPSB"/>
    <property type="match status" value="1"/>
</dbReference>
<dbReference type="PANTHER" id="PTHR35794">
    <property type="entry name" value="CELL DIVISION PROTEIN DIVIVA"/>
    <property type="match status" value="1"/>
</dbReference>
<dbReference type="Pfam" id="PF05103">
    <property type="entry name" value="DivIVA"/>
    <property type="match status" value="1"/>
</dbReference>
<dbReference type="PIRSF" id="PIRSF029938">
    <property type="entry name" value="UCP029938"/>
    <property type="match status" value="1"/>
</dbReference>
<reference key="1">
    <citation type="submission" date="2008-10" db="EMBL/GenBank/DDBJ databases">
        <title>Genome sequence of Bacillus cereus AH187.</title>
        <authorList>
            <person name="Dodson R.J."/>
            <person name="Durkin A.S."/>
            <person name="Rosovitz M.J."/>
            <person name="Rasko D.A."/>
            <person name="Kolsto A.B."/>
            <person name="Okstad O.A."/>
            <person name="Ravel J."/>
            <person name="Sutton G."/>
        </authorList>
    </citation>
    <scope>NUCLEOTIDE SEQUENCE [LARGE SCALE GENOMIC DNA]</scope>
    <source>
        <strain>AH187</strain>
    </source>
</reference>
<name>GPSB_BACC7</name>
<comment type="function">
    <text evidence="1">Divisome component that associates with the complex late in its assembly, after the Z-ring is formed, and is dependent on DivIC and PBP2B for its recruitment to the divisome. Together with EzrA, is a key component of the system that regulates PBP1 localization during cell cycle progression. Its main role could be the removal of PBP1 from the cell pole after pole maturation is completed. Also contributes to the recruitment of PBP1 to the division complex. Not essential for septum formation.</text>
</comment>
<comment type="subunit">
    <text evidence="1">Forms polymers through the coiled coil domains. Interacts with PBP1, MreC and EzrA.</text>
</comment>
<comment type="subcellular location">
    <subcellularLocation>
        <location evidence="1">Cytoplasm</location>
    </subcellularLocation>
    <text evidence="1">Shuttles between the lateral wall and the division site in a cell cycle-dependent manner.</text>
</comment>
<comment type="similarity">
    <text evidence="1">Belongs to the GpsB family.</text>
</comment>
<evidence type="ECO:0000255" key="1">
    <source>
        <dbReference type="HAMAP-Rule" id="MF_02011"/>
    </source>
</evidence>
<feature type="chain" id="PRO_1000189492" description="Cell cycle protein GpsB">
    <location>
        <begin position="1"/>
        <end position="112"/>
    </location>
</feature>
<feature type="coiled-coil region" evidence="1">
    <location>
        <begin position="38"/>
        <end position="72"/>
    </location>
</feature>
<protein>
    <recommendedName>
        <fullName evidence="1">Cell cycle protein GpsB</fullName>
    </recommendedName>
    <alternativeName>
        <fullName evidence="1">Guiding PBP1-shuttling protein</fullName>
    </alternativeName>
</protein>
<sequence>MISDKIKLTAKDILEKEFKTGMRGYQQEEVDKFLDMIIKDYEAFHKEFEQLKQQNARLKRELEEQKLAATQVPQQPVVQTPVAQPVYNNTNTDILKRLSNLEKAVFGSKLYE</sequence>
<organism>
    <name type="scientific">Bacillus cereus (strain AH187)</name>
    <dbReference type="NCBI Taxonomy" id="405534"/>
    <lineage>
        <taxon>Bacteria</taxon>
        <taxon>Bacillati</taxon>
        <taxon>Bacillota</taxon>
        <taxon>Bacilli</taxon>
        <taxon>Bacillales</taxon>
        <taxon>Bacillaceae</taxon>
        <taxon>Bacillus</taxon>
        <taxon>Bacillus cereus group</taxon>
    </lineage>
</organism>